<keyword id="KW-0150">Chloroplast</keyword>
<keyword id="KW-0934">Plastid</keyword>
<keyword id="KW-0687">Ribonucleoprotein</keyword>
<keyword id="KW-0689">Ribosomal protein</keyword>
<keyword id="KW-0694">RNA-binding</keyword>
<keyword id="KW-0699">rRNA-binding</keyword>
<name>RK21_EMIHU</name>
<feature type="chain" id="PRO_0000269443" description="Large ribosomal subunit protein bL21c">
    <location>
        <begin position="1"/>
        <end position="116"/>
    </location>
</feature>
<geneLocation type="chloroplast"/>
<dbReference type="EMBL" id="AY741371">
    <property type="protein sequence ID" value="AAX13818.1"/>
    <property type="molecule type" value="Genomic_DNA"/>
</dbReference>
<dbReference type="RefSeq" id="YP_277319.1">
    <property type="nucleotide sequence ID" value="NC_007288.1"/>
</dbReference>
<dbReference type="SMR" id="Q4G3E8"/>
<dbReference type="STRING" id="2903.Q4G3E8"/>
<dbReference type="GeneID" id="3562552"/>
<dbReference type="GO" id="GO:0009507">
    <property type="term" value="C:chloroplast"/>
    <property type="evidence" value="ECO:0007669"/>
    <property type="project" value="UniProtKB-SubCell"/>
</dbReference>
<dbReference type="GO" id="GO:1990904">
    <property type="term" value="C:ribonucleoprotein complex"/>
    <property type="evidence" value="ECO:0007669"/>
    <property type="project" value="UniProtKB-KW"/>
</dbReference>
<dbReference type="GO" id="GO:0005840">
    <property type="term" value="C:ribosome"/>
    <property type="evidence" value="ECO:0007669"/>
    <property type="project" value="UniProtKB-KW"/>
</dbReference>
<dbReference type="GO" id="GO:0019843">
    <property type="term" value="F:rRNA binding"/>
    <property type="evidence" value="ECO:0007669"/>
    <property type="project" value="UniProtKB-UniRule"/>
</dbReference>
<dbReference type="GO" id="GO:0003735">
    <property type="term" value="F:structural constituent of ribosome"/>
    <property type="evidence" value="ECO:0007669"/>
    <property type="project" value="InterPro"/>
</dbReference>
<dbReference type="GO" id="GO:0006412">
    <property type="term" value="P:translation"/>
    <property type="evidence" value="ECO:0007669"/>
    <property type="project" value="UniProtKB-UniRule"/>
</dbReference>
<dbReference type="HAMAP" id="MF_01363">
    <property type="entry name" value="Ribosomal_bL21"/>
    <property type="match status" value="1"/>
</dbReference>
<dbReference type="InterPro" id="IPR028909">
    <property type="entry name" value="bL21-like"/>
</dbReference>
<dbReference type="InterPro" id="IPR036164">
    <property type="entry name" value="bL21-like_sf"/>
</dbReference>
<dbReference type="InterPro" id="IPR001787">
    <property type="entry name" value="Ribosomal_bL21"/>
</dbReference>
<dbReference type="NCBIfam" id="TIGR00061">
    <property type="entry name" value="L21"/>
    <property type="match status" value="1"/>
</dbReference>
<dbReference type="PANTHER" id="PTHR21349">
    <property type="entry name" value="50S RIBOSOMAL PROTEIN L21"/>
    <property type="match status" value="1"/>
</dbReference>
<dbReference type="PANTHER" id="PTHR21349:SF0">
    <property type="entry name" value="LARGE RIBOSOMAL SUBUNIT PROTEIN BL21M"/>
    <property type="match status" value="1"/>
</dbReference>
<dbReference type="Pfam" id="PF00829">
    <property type="entry name" value="Ribosomal_L21p"/>
    <property type="match status" value="1"/>
</dbReference>
<dbReference type="SUPFAM" id="SSF141091">
    <property type="entry name" value="L21p-like"/>
    <property type="match status" value="1"/>
</dbReference>
<comment type="function">
    <text evidence="1">This protein binds to 23S rRNA.</text>
</comment>
<comment type="subunit">
    <text evidence="1">Part of the 50S ribosomal subunit.</text>
</comment>
<comment type="subcellular location">
    <subcellularLocation>
        <location>Plastid</location>
        <location>Chloroplast</location>
    </subcellularLocation>
</comment>
<comment type="similarity">
    <text evidence="1">Belongs to the bacterial ribosomal protein bL21 family.</text>
</comment>
<sequence>MSSYAIVEACGKQMWIEEGKFYDFDKLPFSKGDVFSLSDILLVKMDDSAEIGQPYLTDKYSVELRVLQHFSGPKIRVYKMRSKKKTRKTFGHRSKLTRVLVQSISKKGVAQTTCFM</sequence>
<proteinExistence type="inferred from homology"/>
<gene>
    <name evidence="1" type="primary">rpl21</name>
</gene>
<accession>Q4G3E8</accession>
<evidence type="ECO:0000255" key="1">
    <source>
        <dbReference type="HAMAP-Rule" id="MF_01363"/>
    </source>
</evidence>
<evidence type="ECO:0000305" key="2"/>
<reference key="1">
    <citation type="journal article" date="2005" name="DNA Res.">
        <title>The complete plastid genome sequence of the haptophyte Emiliania huxleyi: a comparison to other plastid genomes.</title>
        <authorList>
            <person name="Sanchez-Puerta M.V."/>
            <person name="Bachvaroff T.R."/>
            <person name="Delwiche C.F."/>
        </authorList>
    </citation>
    <scope>NUCLEOTIDE SEQUENCE [LARGE SCALE GENOMIC DNA]</scope>
    <source>
        <strain>CCMP373 / CSIRO-CS-57 / BT6</strain>
    </source>
</reference>
<protein>
    <recommendedName>
        <fullName evidence="1">Large ribosomal subunit protein bL21c</fullName>
    </recommendedName>
    <alternativeName>
        <fullName evidence="2">50S ribosomal protein L21, chloroplastic</fullName>
    </alternativeName>
</protein>
<organism>
    <name type="scientific">Emiliania huxleyi</name>
    <name type="common">Coccolithophore</name>
    <name type="synonym">Pontosphaera huxleyi</name>
    <dbReference type="NCBI Taxonomy" id="2903"/>
    <lineage>
        <taxon>Eukaryota</taxon>
        <taxon>Haptista</taxon>
        <taxon>Haptophyta</taxon>
        <taxon>Prymnesiophyceae</taxon>
        <taxon>Isochrysidales</taxon>
        <taxon>Noelaerhabdaceae</taxon>
        <taxon>Emiliania</taxon>
    </lineage>
</organism>